<comment type="function">
    <text evidence="1">Catalyzes the transfer of the gamma-phosphate of ATP to D-galactose to form alpha-D-galactose-1-phosphate (Gal-1-P).</text>
</comment>
<comment type="catalytic activity">
    <reaction evidence="1">
        <text>alpha-D-galactose + ATP = alpha-D-galactose 1-phosphate + ADP + H(+)</text>
        <dbReference type="Rhea" id="RHEA:13553"/>
        <dbReference type="ChEBI" id="CHEBI:15378"/>
        <dbReference type="ChEBI" id="CHEBI:28061"/>
        <dbReference type="ChEBI" id="CHEBI:30616"/>
        <dbReference type="ChEBI" id="CHEBI:58336"/>
        <dbReference type="ChEBI" id="CHEBI:456216"/>
        <dbReference type="EC" id="2.7.1.6"/>
    </reaction>
</comment>
<comment type="pathway">
    <text evidence="1">Carbohydrate metabolism; galactose metabolism.</text>
</comment>
<comment type="subcellular location">
    <subcellularLocation>
        <location evidence="1">Cytoplasm</location>
    </subcellularLocation>
</comment>
<comment type="similarity">
    <text evidence="1">Belongs to the GHMP kinase family. GalK subfamily.</text>
</comment>
<reference key="1">
    <citation type="journal article" date="2005" name="Nucleic Acids Res.">
        <title>The genome sequence of Salmonella enterica serovar Choleraesuis, a highly invasive and resistant zoonotic pathogen.</title>
        <authorList>
            <person name="Chiu C.-H."/>
            <person name="Tang P."/>
            <person name="Chu C."/>
            <person name="Hu S."/>
            <person name="Bao Q."/>
            <person name="Yu J."/>
            <person name="Chou Y.-Y."/>
            <person name="Wang H.-S."/>
            <person name="Lee Y.-S."/>
        </authorList>
    </citation>
    <scope>NUCLEOTIDE SEQUENCE [LARGE SCALE GENOMIC DNA]</scope>
    <source>
        <strain>SC-B67</strain>
    </source>
</reference>
<sequence>MNLKEKTRALFAEIFSYPATHTIQAPGRVNLIGEHTDYNDGFVLPCAIDYQTVISCAPRDDRTVRVIAADYDNQVEEFSLDAPIVTHDSQQWSNYVRGVVKHLQQRNNAFGGVDMVISGNVPQGAGLSSSASLEVAVGTVFQQLYHLPLDGAQIALNGQEAENQFVGCNCGIMDQLISALGKKDHALLIDCRTLGAKAVSMPKGVAVVIINSNFKRTLVGSEYNTRREQCETGARFFQQPALRDVSLEAFNAVASELDPVVAKRVRHVLSENARTVEAASALEKGDLQRMGQLMAESHASMRDDFEITVPQIDTLVDIVKATIGDQGGVRMTGGGFGGCVVALIPEDLVPAVRQAVAQQYEAKTGIKETFYVCKPSQGAGQC</sequence>
<feature type="chain" id="PRO_1000005759" description="Galactokinase">
    <location>
        <begin position="1"/>
        <end position="382"/>
    </location>
</feature>
<feature type="active site" description="Proton acceptor" evidence="1">
    <location>
        <position position="174"/>
    </location>
</feature>
<feature type="binding site" evidence="1">
    <location>
        <begin position="34"/>
        <end position="37"/>
    </location>
    <ligand>
        <name>substrate</name>
    </ligand>
</feature>
<feature type="binding site" evidence="1">
    <location>
        <begin position="124"/>
        <end position="130"/>
    </location>
    <ligand>
        <name>ATP</name>
        <dbReference type="ChEBI" id="CHEBI:30616"/>
    </ligand>
</feature>
<feature type="binding site" evidence="1">
    <location>
        <position position="130"/>
    </location>
    <ligand>
        <name>Mg(2+)</name>
        <dbReference type="ChEBI" id="CHEBI:18420"/>
    </ligand>
</feature>
<feature type="binding site" evidence="1">
    <location>
        <position position="162"/>
    </location>
    <ligand>
        <name>Mg(2+)</name>
        <dbReference type="ChEBI" id="CHEBI:18420"/>
    </ligand>
</feature>
<feature type="binding site" evidence="1">
    <location>
        <position position="223"/>
    </location>
    <ligand>
        <name>substrate</name>
    </ligand>
</feature>
<feature type="site" description="Transition state stabilizer" evidence="1">
    <location>
        <position position="28"/>
    </location>
</feature>
<protein>
    <recommendedName>
        <fullName evidence="1">Galactokinase</fullName>
        <ecNumber evidence="1">2.7.1.6</ecNumber>
    </recommendedName>
    <alternativeName>
        <fullName evidence="1">Galactose kinase</fullName>
    </alternativeName>
</protein>
<evidence type="ECO:0000255" key="1">
    <source>
        <dbReference type="HAMAP-Rule" id="MF_00246"/>
    </source>
</evidence>
<gene>
    <name evidence="1" type="primary">galK</name>
    <name type="ordered locus">SCH_0772</name>
</gene>
<organism>
    <name type="scientific">Salmonella choleraesuis (strain SC-B67)</name>
    <dbReference type="NCBI Taxonomy" id="321314"/>
    <lineage>
        <taxon>Bacteria</taxon>
        <taxon>Pseudomonadati</taxon>
        <taxon>Pseudomonadota</taxon>
        <taxon>Gammaproteobacteria</taxon>
        <taxon>Enterobacterales</taxon>
        <taxon>Enterobacteriaceae</taxon>
        <taxon>Salmonella</taxon>
    </lineage>
</organism>
<accession>Q57RI3</accession>
<name>GAL1_SALCH</name>
<proteinExistence type="inferred from homology"/>
<dbReference type="EC" id="2.7.1.6" evidence="1"/>
<dbReference type="EMBL" id="AE017220">
    <property type="protein sequence ID" value="AAX64678.1"/>
    <property type="molecule type" value="Genomic_DNA"/>
</dbReference>
<dbReference type="RefSeq" id="WP_001539523.1">
    <property type="nucleotide sequence ID" value="NC_006905.1"/>
</dbReference>
<dbReference type="SMR" id="Q57RI3"/>
<dbReference type="KEGG" id="sec:SCH_0772"/>
<dbReference type="HOGENOM" id="CLU_017814_2_1_6"/>
<dbReference type="UniPathway" id="UPA00214"/>
<dbReference type="Proteomes" id="UP000000538">
    <property type="component" value="Chromosome"/>
</dbReference>
<dbReference type="GO" id="GO:0005829">
    <property type="term" value="C:cytosol"/>
    <property type="evidence" value="ECO:0007669"/>
    <property type="project" value="TreeGrafter"/>
</dbReference>
<dbReference type="GO" id="GO:0005524">
    <property type="term" value="F:ATP binding"/>
    <property type="evidence" value="ECO:0007669"/>
    <property type="project" value="UniProtKB-UniRule"/>
</dbReference>
<dbReference type="GO" id="GO:0004335">
    <property type="term" value="F:galactokinase activity"/>
    <property type="evidence" value="ECO:0007669"/>
    <property type="project" value="UniProtKB-UniRule"/>
</dbReference>
<dbReference type="GO" id="GO:0000287">
    <property type="term" value="F:magnesium ion binding"/>
    <property type="evidence" value="ECO:0007669"/>
    <property type="project" value="UniProtKB-UniRule"/>
</dbReference>
<dbReference type="GO" id="GO:0006012">
    <property type="term" value="P:galactose metabolic process"/>
    <property type="evidence" value="ECO:0007669"/>
    <property type="project" value="UniProtKB-UniRule"/>
</dbReference>
<dbReference type="FunFam" id="3.30.230.10:FF:000017">
    <property type="entry name" value="Galactokinase"/>
    <property type="match status" value="1"/>
</dbReference>
<dbReference type="FunFam" id="3.30.70.890:FF:000001">
    <property type="entry name" value="Galactokinase"/>
    <property type="match status" value="1"/>
</dbReference>
<dbReference type="Gene3D" id="3.30.230.10">
    <property type="match status" value="1"/>
</dbReference>
<dbReference type="Gene3D" id="3.30.70.890">
    <property type="entry name" value="GHMP kinase, C-terminal domain"/>
    <property type="match status" value="1"/>
</dbReference>
<dbReference type="HAMAP" id="MF_00246">
    <property type="entry name" value="Galactokinase"/>
    <property type="match status" value="1"/>
</dbReference>
<dbReference type="InterPro" id="IPR000705">
    <property type="entry name" value="Galactokinase"/>
</dbReference>
<dbReference type="InterPro" id="IPR022963">
    <property type="entry name" value="Galactokinase_bac"/>
</dbReference>
<dbReference type="InterPro" id="IPR019741">
    <property type="entry name" value="Galactokinase_CS"/>
</dbReference>
<dbReference type="InterPro" id="IPR019539">
    <property type="entry name" value="GalKase_N"/>
</dbReference>
<dbReference type="InterPro" id="IPR013750">
    <property type="entry name" value="GHMP_kinase_C_dom"/>
</dbReference>
<dbReference type="InterPro" id="IPR036554">
    <property type="entry name" value="GHMP_kinase_C_sf"/>
</dbReference>
<dbReference type="InterPro" id="IPR006204">
    <property type="entry name" value="GHMP_kinase_N_dom"/>
</dbReference>
<dbReference type="InterPro" id="IPR006203">
    <property type="entry name" value="GHMP_knse_ATP-bd_CS"/>
</dbReference>
<dbReference type="InterPro" id="IPR006206">
    <property type="entry name" value="Mevalonate/galactokinase"/>
</dbReference>
<dbReference type="InterPro" id="IPR020568">
    <property type="entry name" value="Ribosomal_Su5_D2-typ_SF"/>
</dbReference>
<dbReference type="InterPro" id="IPR014721">
    <property type="entry name" value="Ribsml_uS5_D2-typ_fold_subgr"/>
</dbReference>
<dbReference type="NCBIfam" id="TIGR00131">
    <property type="entry name" value="gal_kin"/>
    <property type="match status" value="1"/>
</dbReference>
<dbReference type="NCBIfam" id="NF003472">
    <property type="entry name" value="PRK05101.1"/>
    <property type="match status" value="1"/>
</dbReference>
<dbReference type="PANTHER" id="PTHR10457:SF7">
    <property type="entry name" value="GALACTOKINASE-RELATED"/>
    <property type="match status" value="1"/>
</dbReference>
<dbReference type="PANTHER" id="PTHR10457">
    <property type="entry name" value="MEVALONATE KINASE/GALACTOKINASE"/>
    <property type="match status" value="1"/>
</dbReference>
<dbReference type="Pfam" id="PF10509">
    <property type="entry name" value="GalKase_gal_bdg"/>
    <property type="match status" value="1"/>
</dbReference>
<dbReference type="Pfam" id="PF08544">
    <property type="entry name" value="GHMP_kinases_C"/>
    <property type="match status" value="1"/>
</dbReference>
<dbReference type="Pfam" id="PF00288">
    <property type="entry name" value="GHMP_kinases_N"/>
    <property type="match status" value="1"/>
</dbReference>
<dbReference type="PIRSF" id="PIRSF000530">
    <property type="entry name" value="Galactokinase"/>
    <property type="match status" value="1"/>
</dbReference>
<dbReference type="PRINTS" id="PR00473">
    <property type="entry name" value="GALCTOKINASE"/>
</dbReference>
<dbReference type="PRINTS" id="PR00959">
    <property type="entry name" value="MEVGALKINASE"/>
</dbReference>
<dbReference type="SUPFAM" id="SSF55060">
    <property type="entry name" value="GHMP Kinase, C-terminal domain"/>
    <property type="match status" value="1"/>
</dbReference>
<dbReference type="SUPFAM" id="SSF54211">
    <property type="entry name" value="Ribosomal protein S5 domain 2-like"/>
    <property type="match status" value="1"/>
</dbReference>
<dbReference type="PROSITE" id="PS00106">
    <property type="entry name" value="GALACTOKINASE"/>
    <property type="match status" value="1"/>
</dbReference>
<dbReference type="PROSITE" id="PS00627">
    <property type="entry name" value="GHMP_KINASES_ATP"/>
    <property type="match status" value="1"/>
</dbReference>
<keyword id="KW-0067">ATP-binding</keyword>
<keyword id="KW-0119">Carbohydrate metabolism</keyword>
<keyword id="KW-0963">Cytoplasm</keyword>
<keyword id="KW-0299">Galactose metabolism</keyword>
<keyword id="KW-0418">Kinase</keyword>
<keyword id="KW-0460">Magnesium</keyword>
<keyword id="KW-0479">Metal-binding</keyword>
<keyword id="KW-0547">Nucleotide-binding</keyword>
<keyword id="KW-0808">Transferase</keyword>